<protein>
    <recommendedName>
        <fullName>Small cardioactive peptides</fullName>
    </recommendedName>
    <component>
        <recommendedName>
            <fullName>Small cardioactive peptide B</fullName>
            <shortName>SCP B</shortName>
            <shortName>SCPb</shortName>
        </recommendedName>
    </component>
    <component>
        <recommendedName>
            <fullName>Small cardioactive peptide A</fullName>
            <shortName>SCP A</shortName>
            <shortName>SCPa</shortName>
        </recommendedName>
    </component>
</protein>
<accession>O97374</accession>
<evidence type="ECO:0000255" key="1"/>
<evidence type="ECO:0000269" key="2">
    <source>
    </source>
</evidence>
<evidence type="ECO:0000305" key="3"/>
<keyword id="KW-0027">Amidation</keyword>
<keyword id="KW-0903">Direct protein sequencing</keyword>
<keyword id="KW-0527">Neuropeptide</keyword>
<keyword id="KW-0964">Secreted</keyword>
<keyword id="KW-0732">Signal</keyword>
<dbReference type="EMBL" id="AF056941">
    <property type="protein sequence ID" value="AAC99318.1"/>
    <property type="molecule type" value="mRNA"/>
</dbReference>
<dbReference type="EMBL" id="AF157552">
    <property type="protein sequence ID" value="AAD40954.1"/>
    <property type="molecule type" value="mRNA"/>
</dbReference>
<dbReference type="SMR" id="O97374"/>
<dbReference type="GO" id="GO:0005576">
    <property type="term" value="C:extracellular region"/>
    <property type="evidence" value="ECO:0007669"/>
    <property type="project" value="UniProtKB-SubCell"/>
</dbReference>
<dbReference type="GO" id="GO:0007218">
    <property type="term" value="P:neuropeptide signaling pathway"/>
    <property type="evidence" value="ECO:0007669"/>
    <property type="project" value="UniProtKB-KW"/>
</dbReference>
<reference key="1">
    <citation type="journal article" date="1999" name="Eur. J. Neurosci.">
        <title>Small cardioactive peptide gene: structure, expression and mass spectrometric analysis reveals a complex pattern of co-transmitters in a snail feeding neuron.</title>
        <authorList>
            <person name="Perry S.J."/>
            <person name="Dobbins A.C."/>
            <person name="Schofield M.G."/>
            <person name="Piper M.R."/>
            <person name="Benjamin P.R."/>
        </authorList>
    </citation>
    <scope>NUCLEOTIDE SEQUENCE [MRNA]</scope>
</reference>
<reference key="2">
    <citation type="journal article" date="1998" name="Biochemistry">
        <title>Direct mass spectrometric peptide profiling and sequencing of single neurons reveals differential peptide patterns in a small neuronal network.</title>
        <authorList>
            <person name="Jimenez C.R."/>
            <person name="Li K.W."/>
            <person name="Dreisewerd K."/>
            <person name="Spijker S."/>
            <person name="Kingston R."/>
            <person name="Bateman R.H."/>
            <person name="Burlingame A.L."/>
            <person name="Smit A.B."/>
            <person name="Van Minnen J."/>
            <person name="Geraerts W.P."/>
        </authorList>
    </citation>
    <scope>NUCLEOTIDE SEQUENCE [MRNA]</scope>
    <scope>PARTIAL PROTEIN SEQUENCE</scope>
    <scope>AMIDATION AT MET-33 AND MET-44</scope>
    <scope>IDENTIFICATION BY MASS SPECTROMETRY</scope>
</reference>
<feature type="signal peptide" evidence="1">
    <location>
        <begin position="1"/>
        <end position="24"/>
    </location>
</feature>
<feature type="peptide" id="PRO_0000001878" description="Small cardioactive peptide B">
    <location>
        <begin position="25"/>
        <end position="33"/>
    </location>
</feature>
<feature type="peptide" id="PRO_0000001879" description="Small cardioactive peptide A">
    <location>
        <begin position="36"/>
        <end position="44"/>
    </location>
</feature>
<feature type="propeptide" id="PRO_0000001880" description="Carboxy-terminal peptide">
    <location>
        <begin position="47"/>
        <end position="136"/>
    </location>
</feature>
<feature type="modified residue" description="Methionine amide" evidence="2">
    <location>
        <position position="33"/>
    </location>
</feature>
<feature type="modified residue" description="Methionine amide" evidence="2">
    <location>
        <position position="44"/>
    </location>
</feature>
<comment type="function">
    <text>The cardioactive peptides enhance the contractions of the auricle in vitro.</text>
</comment>
<comment type="subcellular location">
    <subcellularLocation>
        <location>Secreted</location>
    </subcellularLocation>
</comment>
<comment type="similarity">
    <text evidence="3">Belongs to the SCP family.</text>
</comment>
<name>SCP_LYMST</name>
<gene>
    <name type="primary">SCP</name>
</gene>
<sequence>MEITLPRVSLSLAVLLVIVCSVDAQNYLAFPRMGRSGYLAFPRMGRSHFKSETSADVTGCCGVGIKNEFLIGQDGKEEIRSACGARADCCEGLKEVVDQKNDGVYFSMCVPDITFAQASSVRSSEVFNKLKSLLEK</sequence>
<organism>
    <name type="scientific">Lymnaea stagnalis</name>
    <name type="common">Great pond snail</name>
    <name type="synonym">Helix stagnalis</name>
    <dbReference type="NCBI Taxonomy" id="6523"/>
    <lineage>
        <taxon>Eukaryota</taxon>
        <taxon>Metazoa</taxon>
        <taxon>Spiralia</taxon>
        <taxon>Lophotrochozoa</taxon>
        <taxon>Mollusca</taxon>
        <taxon>Gastropoda</taxon>
        <taxon>Heterobranchia</taxon>
        <taxon>Euthyneura</taxon>
        <taxon>Panpulmonata</taxon>
        <taxon>Hygrophila</taxon>
        <taxon>Lymnaeoidea</taxon>
        <taxon>Lymnaeidae</taxon>
        <taxon>Lymnaea</taxon>
    </lineage>
</organism>
<proteinExistence type="evidence at protein level"/>